<dbReference type="EC" id="1.7.2.2" evidence="1"/>
<dbReference type="EMBL" id="CP000361">
    <property type="protein sequence ID" value="ABV66622.1"/>
    <property type="molecule type" value="Genomic_DNA"/>
</dbReference>
<dbReference type="RefSeq" id="WP_012012181.1">
    <property type="nucleotide sequence ID" value="NC_009850.1"/>
</dbReference>
<dbReference type="SMR" id="A8ERP8"/>
<dbReference type="STRING" id="367737.Abu_0347"/>
<dbReference type="GeneID" id="24304457"/>
<dbReference type="KEGG" id="abu:Abu_0347"/>
<dbReference type="eggNOG" id="COG3303">
    <property type="taxonomic scope" value="Bacteria"/>
</dbReference>
<dbReference type="HOGENOM" id="CLU_035040_1_0_7"/>
<dbReference type="UniPathway" id="UPA00653"/>
<dbReference type="Proteomes" id="UP000001136">
    <property type="component" value="Chromosome"/>
</dbReference>
<dbReference type="GO" id="GO:0030288">
    <property type="term" value="C:outer membrane-bounded periplasmic space"/>
    <property type="evidence" value="ECO:0007669"/>
    <property type="project" value="TreeGrafter"/>
</dbReference>
<dbReference type="GO" id="GO:0005509">
    <property type="term" value="F:calcium ion binding"/>
    <property type="evidence" value="ECO:0007669"/>
    <property type="project" value="InterPro"/>
</dbReference>
<dbReference type="GO" id="GO:0020037">
    <property type="term" value="F:heme binding"/>
    <property type="evidence" value="ECO:0007669"/>
    <property type="project" value="InterPro"/>
</dbReference>
<dbReference type="GO" id="GO:0042279">
    <property type="term" value="F:nitrite reductase (cytochrome, ammonia-forming) activity"/>
    <property type="evidence" value="ECO:0007669"/>
    <property type="project" value="UniProtKB-EC"/>
</dbReference>
<dbReference type="GO" id="GO:0019645">
    <property type="term" value="P:anaerobic electron transport chain"/>
    <property type="evidence" value="ECO:0007669"/>
    <property type="project" value="TreeGrafter"/>
</dbReference>
<dbReference type="GO" id="GO:0042128">
    <property type="term" value="P:nitrate assimilation"/>
    <property type="evidence" value="ECO:0007669"/>
    <property type="project" value="UniProtKB-UniPathway"/>
</dbReference>
<dbReference type="CDD" id="cd00548">
    <property type="entry name" value="NrfA-like"/>
    <property type="match status" value="1"/>
</dbReference>
<dbReference type="Gene3D" id="1.20.140.10">
    <property type="entry name" value="Butyryl-CoA Dehydrogenase, subunit A, domain 3"/>
    <property type="match status" value="1"/>
</dbReference>
<dbReference type="Gene3D" id="1.10.1130.10">
    <property type="entry name" value="Flavocytochrome C3, Chain A"/>
    <property type="match status" value="1"/>
</dbReference>
<dbReference type="HAMAP" id="MF_01182">
    <property type="entry name" value="Cytochrom_C552"/>
    <property type="match status" value="1"/>
</dbReference>
<dbReference type="InterPro" id="IPR003321">
    <property type="entry name" value="Cyt_c552"/>
</dbReference>
<dbReference type="InterPro" id="IPR017570">
    <property type="entry name" value="Cyt_c_NO2Rdtase_formate-dep"/>
</dbReference>
<dbReference type="InterPro" id="IPR036280">
    <property type="entry name" value="Multihaem_cyt_sf"/>
</dbReference>
<dbReference type="NCBIfam" id="NF008339">
    <property type="entry name" value="PRK11125.1"/>
    <property type="match status" value="1"/>
</dbReference>
<dbReference type="PANTHER" id="PTHR30633:SF0">
    <property type="entry name" value="CYTOCHROME C-552"/>
    <property type="match status" value="1"/>
</dbReference>
<dbReference type="PANTHER" id="PTHR30633">
    <property type="entry name" value="CYTOCHROME C-552 RESPIRATORY NITRITE REDUCTASE"/>
    <property type="match status" value="1"/>
</dbReference>
<dbReference type="Pfam" id="PF02335">
    <property type="entry name" value="Cytochrom_C552"/>
    <property type="match status" value="1"/>
</dbReference>
<dbReference type="PIRSF" id="PIRSF000243">
    <property type="entry name" value="Cyt_c552"/>
    <property type="match status" value="1"/>
</dbReference>
<dbReference type="SUPFAM" id="SSF48695">
    <property type="entry name" value="Multiheme cytochromes"/>
    <property type="match status" value="1"/>
</dbReference>
<dbReference type="PROSITE" id="PS51008">
    <property type="entry name" value="MULTIHEME_CYTC"/>
    <property type="match status" value="1"/>
</dbReference>
<keyword id="KW-0106">Calcium</keyword>
<keyword id="KW-0249">Electron transport</keyword>
<keyword id="KW-0349">Heme</keyword>
<keyword id="KW-0408">Iron</keyword>
<keyword id="KW-0479">Metal-binding</keyword>
<keyword id="KW-0560">Oxidoreductase</keyword>
<keyword id="KW-0574">Periplasm</keyword>
<keyword id="KW-1185">Reference proteome</keyword>
<keyword id="KW-0732">Signal</keyword>
<keyword id="KW-0813">Transport</keyword>
<name>NRFA_ALIB4</name>
<protein>
    <recommendedName>
        <fullName evidence="1">Cytochrome c-552</fullName>
        <ecNumber evidence="1">1.7.2.2</ecNumber>
    </recommendedName>
    <alternativeName>
        <fullName evidence="1">Ammonia-forming cytochrome c nitrite reductase</fullName>
        <shortName evidence="1">Cytochrome c nitrite reductase</shortName>
    </alternativeName>
</protein>
<evidence type="ECO:0000255" key="1">
    <source>
        <dbReference type="HAMAP-Rule" id="MF_01182"/>
    </source>
</evidence>
<comment type="function">
    <text evidence="1">Catalyzes the reduction of nitrite to ammonia, consuming six electrons in the process.</text>
</comment>
<comment type="catalytic activity">
    <reaction evidence="1">
        <text>6 Fe(III)-[cytochrome c] + NH4(+) + 2 H2O = 6 Fe(II)-[cytochrome c] + nitrite + 8 H(+)</text>
        <dbReference type="Rhea" id="RHEA:13089"/>
        <dbReference type="Rhea" id="RHEA-COMP:10350"/>
        <dbReference type="Rhea" id="RHEA-COMP:14399"/>
        <dbReference type="ChEBI" id="CHEBI:15377"/>
        <dbReference type="ChEBI" id="CHEBI:15378"/>
        <dbReference type="ChEBI" id="CHEBI:16301"/>
        <dbReference type="ChEBI" id="CHEBI:28938"/>
        <dbReference type="ChEBI" id="CHEBI:29033"/>
        <dbReference type="ChEBI" id="CHEBI:29034"/>
        <dbReference type="EC" id="1.7.2.2"/>
    </reaction>
</comment>
<comment type="cofactor">
    <cofactor evidence="1">
        <name>Ca(2+)</name>
        <dbReference type="ChEBI" id="CHEBI:29108"/>
    </cofactor>
    <text evidence="1">Binds 1 Ca(2+) ion per monomer.</text>
</comment>
<comment type="cofactor">
    <cofactor evidence="1">
        <name>heme c</name>
        <dbReference type="ChEBI" id="CHEBI:61717"/>
    </cofactor>
    <text evidence="1">Binds 5 heme c groups covalently per monomer.</text>
</comment>
<comment type="pathway">
    <text evidence="1">Nitrogen metabolism; nitrate reduction (assimilation).</text>
</comment>
<comment type="subcellular location">
    <subcellularLocation>
        <location evidence="1">Periplasm</location>
    </subcellularLocation>
</comment>
<comment type="similarity">
    <text evidence="1">Belongs to the cytochrome c-552 family.</text>
</comment>
<proteinExistence type="inferred from homology"/>
<feature type="signal peptide" evidence="1">
    <location>
        <begin position="1"/>
        <end position="23"/>
    </location>
</feature>
<feature type="chain" id="PRO_1000085447" description="Cytochrome c-552">
    <location>
        <begin position="24"/>
        <end position="496"/>
    </location>
</feature>
<feature type="binding site" description="axial binding residue" evidence="1">
    <location>
        <position position="100"/>
    </location>
    <ligand>
        <name>heme c</name>
        <dbReference type="ChEBI" id="CHEBI:61717"/>
        <label>3</label>
    </ligand>
    <ligandPart>
        <name>Fe</name>
        <dbReference type="ChEBI" id="CHEBI:18248"/>
    </ligandPart>
</feature>
<feature type="binding site" description="covalent" evidence="1">
    <location>
        <position position="128"/>
    </location>
    <ligand>
        <name>heme</name>
        <dbReference type="ChEBI" id="CHEBI:30413"/>
        <label>1</label>
    </ligand>
</feature>
<feature type="binding site" description="covalent" evidence="1">
    <location>
        <position position="131"/>
    </location>
    <ligand>
        <name>heme</name>
        <dbReference type="ChEBI" id="CHEBI:30413"/>
        <label>1</label>
    </ligand>
</feature>
<feature type="binding site" description="axial binding residue" evidence="1">
    <location>
        <position position="132"/>
    </location>
    <ligand>
        <name>heme</name>
        <dbReference type="ChEBI" id="CHEBI:30413"/>
        <label>1</label>
    </ligand>
    <ligandPart>
        <name>Fe</name>
        <dbReference type="ChEBI" id="CHEBI:18248"/>
    </ligandPart>
</feature>
<feature type="binding site" description="covalent" evidence="1">
    <location>
        <position position="166"/>
    </location>
    <ligand>
        <name>heme c</name>
        <dbReference type="ChEBI" id="CHEBI:61717"/>
        <label>2</label>
    </ligand>
</feature>
<feature type="binding site" description="covalent" evidence="1">
    <location>
        <position position="169"/>
    </location>
    <ligand>
        <name>heme c</name>
        <dbReference type="ChEBI" id="CHEBI:61717"/>
        <label>2</label>
    </ligand>
</feature>
<feature type="binding site" description="axial binding residue" evidence="1">
    <location>
        <position position="170"/>
    </location>
    <ligand>
        <name>heme c</name>
        <dbReference type="ChEBI" id="CHEBI:61717"/>
        <label>2</label>
    </ligand>
    <ligandPart>
        <name>Fe</name>
        <dbReference type="ChEBI" id="CHEBI:18248"/>
    </ligandPart>
</feature>
<feature type="binding site" description="covalent" evidence="1">
    <location>
        <position position="210"/>
    </location>
    <ligand>
        <name>heme c</name>
        <dbReference type="ChEBI" id="CHEBI:61717"/>
        <label>3</label>
    </ligand>
</feature>
<feature type="binding site" description="covalent" evidence="1">
    <location>
        <position position="213"/>
    </location>
    <ligand>
        <name>heme c</name>
        <dbReference type="ChEBI" id="CHEBI:61717"/>
        <label>3</label>
    </ligand>
</feature>
<feature type="binding site" description="axial binding residue" evidence="1">
    <location>
        <position position="214"/>
    </location>
    <ligand>
        <name>heme c</name>
        <dbReference type="ChEBI" id="CHEBI:61717"/>
        <label>3</label>
    </ligand>
    <ligandPart>
        <name>Fe</name>
        <dbReference type="ChEBI" id="CHEBI:18248"/>
    </ligandPart>
</feature>
<feature type="binding site" evidence="1">
    <location>
        <position position="216"/>
    </location>
    <ligand>
        <name>Ca(2+)</name>
        <dbReference type="ChEBI" id="CHEBI:29108"/>
    </ligand>
</feature>
<feature type="binding site" evidence="1">
    <location>
        <position position="217"/>
    </location>
    <ligand>
        <name>Ca(2+)</name>
        <dbReference type="ChEBI" id="CHEBI:29108"/>
    </ligand>
</feature>
<feature type="binding site" evidence="1">
    <location>
        <position position="217"/>
    </location>
    <ligand>
        <name>substrate</name>
    </ligand>
</feature>
<feature type="binding site" evidence="1">
    <location>
        <position position="269"/>
    </location>
    <ligand>
        <name>Ca(2+)</name>
        <dbReference type="ChEBI" id="CHEBI:29108"/>
    </ligand>
</feature>
<feature type="binding site" evidence="1">
    <location>
        <position position="271"/>
    </location>
    <ligand>
        <name>Ca(2+)</name>
        <dbReference type="ChEBI" id="CHEBI:29108"/>
    </ligand>
</feature>
<feature type="binding site" evidence="1">
    <location>
        <position position="272"/>
    </location>
    <ligand>
        <name>substrate</name>
    </ligand>
</feature>
<feature type="binding site" description="axial binding residue" evidence="1">
    <location>
        <position position="283"/>
    </location>
    <ligand>
        <name>heme c</name>
        <dbReference type="ChEBI" id="CHEBI:61717"/>
        <label>5</label>
    </ligand>
    <ligandPart>
        <name>Fe</name>
        <dbReference type="ChEBI" id="CHEBI:18248"/>
    </ligandPart>
</feature>
<feature type="binding site" description="covalent" evidence="1">
    <location>
        <position position="290"/>
    </location>
    <ligand>
        <name>heme c</name>
        <dbReference type="ChEBI" id="CHEBI:61717"/>
        <label>4</label>
    </ligand>
</feature>
<feature type="binding site" description="covalent" evidence="1">
    <location>
        <position position="293"/>
    </location>
    <ligand>
        <name>heme c</name>
        <dbReference type="ChEBI" id="CHEBI:61717"/>
        <label>4</label>
    </ligand>
</feature>
<feature type="binding site" description="axial binding residue" evidence="1">
    <location>
        <position position="294"/>
    </location>
    <ligand>
        <name>heme c</name>
        <dbReference type="ChEBI" id="CHEBI:61717"/>
        <label>4</label>
    </ligand>
    <ligandPart>
        <name>Fe</name>
        <dbReference type="ChEBI" id="CHEBI:18248"/>
    </ligandPart>
</feature>
<feature type="binding site" description="axial binding residue" evidence="1">
    <location>
        <position position="308"/>
    </location>
    <ligand>
        <name>heme c</name>
        <dbReference type="ChEBI" id="CHEBI:61717"/>
        <label>2</label>
    </ligand>
    <ligandPart>
        <name>Fe</name>
        <dbReference type="ChEBI" id="CHEBI:18248"/>
    </ligandPart>
</feature>
<feature type="binding site" description="covalent" evidence="1">
    <location>
        <position position="321"/>
    </location>
    <ligand>
        <name>heme c</name>
        <dbReference type="ChEBI" id="CHEBI:61717"/>
        <label>5</label>
    </ligand>
</feature>
<feature type="binding site" description="covalent" evidence="1">
    <location>
        <position position="324"/>
    </location>
    <ligand>
        <name>heme c</name>
        <dbReference type="ChEBI" id="CHEBI:61717"/>
        <label>5</label>
    </ligand>
</feature>
<feature type="binding site" description="axial binding residue" evidence="1">
    <location>
        <position position="325"/>
    </location>
    <ligand>
        <name>heme c</name>
        <dbReference type="ChEBI" id="CHEBI:61717"/>
        <label>5</label>
    </ligand>
    <ligandPart>
        <name>Fe</name>
        <dbReference type="ChEBI" id="CHEBI:18248"/>
    </ligandPart>
</feature>
<feature type="binding site" description="axial binding residue" evidence="1">
    <location>
        <position position="400"/>
    </location>
    <ligand>
        <name>heme c</name>
        <dbReference type="ChEBI" id="CHEBI:61717"/>
        <label>4</label>
    </ligand>
    <ligandPart>
        <name>Fe</name>
        <dbReference type="ChEBI" id="CHEBI:18248"/>
    </ligandPart>
</feature>
<reference key="1">
    <citation type="journal article" date="2007" name="PLoS ONE">
        <title>The complete genome sequence and analysis of the Epsilonproteobacterium Arcobacter butzleri.</title>
        <authorList>
            <person name="Miller W.G."/>
            <person name="Parker C.T."/>
            <person name="Rubenfield M."/>
            <person name="Mendz G.L."/>
            <person name="Woesten M.M.S.M."/>
            <person name="Ussery D.W."/>
            <person name="Stolz J.F."/>
            <person name="Binnewies T.T."/>
            <person name="Hallin P.F."/>
            <person name="Wang G."/>
            <person name="Malek J.A."/>
            <person name="Rogosin A."/>
            <person name="Stanker L.H."/>
            <person name="Mandrell R.E."/>
        </authorList>
    </citation>
    <scope>NUCLEOTIDE SEQUENCE [LARGE SCALE GENOMIC DNA]</scope>
    <source>
        <strain>RM4018</strain>
    </source>
</reference>
<gene>
    <name evidence="1" type="primary">nrfA</name>
    <name type="ordered locus">Abu_0347</name>
</gene>
<organism>
    <name type="scientific">Aliarcobacter butzleri (strain RM4018)</name>
    <name type="common">Arcobacter butzleri</name>
    <dbReference type="NCBI Taxonomy" id="367737"/>
    <lineage>
        <taxon>Bacteria</taxon>
        <taxon>Pseudomonadati</taxon>
        <taxon>Campylobacterota</taxon>
        <taxon>Epsilonproteobacteria</taxon>
        <taxon>Campylobacterales</taxon>
        <taxon>Arcobacteraceae</taxon>
        <taxon>Aliarcobacter</taxon>
    </lineage>
</organism>
<accession>A8ERP8</accession>
<sequence length="496" mass="56273">MKKYKFLFAISIIAIGLMTVLLASINEKKEEKENLLSVPKIEKWETKNEEFRKFYPREFDSWKQTKNSDQIDDMLKLHPEMVVLWAGYAFSKDYNAPRGHFYAIDDVSNSLRTGAPTDKESGPLPSACWTCKSPDVPRIMHEQGNNEYFTGKWAKYGADIVNPIGCVDCHNPETMELQVGRSYLNDALKAEGKSPTLATATQQDMRTLVCAQCHVEYYFKKTPLENGKTAMAVTLPWANGTTVEDMEKYYDTIEFSDWVHQVSKTPMIKAQHPEYETWKTGAHGRNNVSCADCHMPYTQEGGIKYTDHKIGNPLENMDKTCMNCHRVSEKSLLANIQDKKARKDDLNQKAMEQIVAAHLEAGKAWEVGATPEEMKDILTDIRHAQWRWDFAAASHSAFFHAPEETLKTLGTAIEKAGNARIKLAKVLAKHGVTDYKAPTITDKKQAQELIGLPMGKLIEEKKQFTNGLLKDWKNEAEQKGLYNPKSREGVETKTSY</sequence>